<protein>
    <recommendedName>
        <fullName evidence="1">3-isopropylmalate dehydrogenase</fullName>
        <ecNumber evidence="1">1.1.1.85</ecNumber>
    </recommendedName>
    <alternativeName>
        <fullName evidence="1">3-IPM-DH</fullName>
    </alternativeName>
    <alternativeName>
        <fullName evidence="1">Beta-IPM dehydrogenase</fullName>
        <shortName evidence="1">IMDH</shortName>
    </alternativeName>
</protein>
<reference key="1">
    <citation type="submission" date="2006-10" db="EMBL/GenBank/DDBJ databases">
        <authorList>
            <person name="Fleischmann R.D."/>
            <person name="Dodson R.J."/>
            <person name="Haft D.H."/>
            <person name="Merkel J.S."/>
            <person name="Nelson W.C."/>
            <person name="Fraser C.M."/>
        </authorList>
    </citation>
    <scope>NUCLEOTIDE SEQUENCE [LARGE SCALE GENOMIC DNA]</scope>
    <source>
        <strain>104</strain>
    </source>
</reference>
<gene>
    <name evidence="1" type="primary">leuB</name>
    <name type="ordered locus">MAV_3845</name>
</gene>
<evidence type="ECO:0000255" key="1">
    <source>
        <dbReference type="HAMAP-Rule" id="MF_01035"/>
    </source>
</evidence>
<organism>
    <name type="scientific">Mycobacterium avium (strain 104)</name>
    <dbReference type="NCBI Taxonomy" id="243243"/>
    <lineage>
        <taxon>Bacteria</taxon>
        <taxon>Bacillati</taxon>
        <taxon>Actinomycetota</taxon>
        <taxon>Actinomycetes</taxon>
        <taxon>Mycobacteriales</taxon>
        <taxon>Mycobacteriaceae</taxon>
        <taxon>Mycobacterium</taxon>
        <taxon>Mycobacterium avium complex (MAC)</taxon>
    </lineage>
</organism>
<name>LEU3_MYCA1</name>
<accession>A0QJC2</accession>
<sequence length="336" mass="35646">MKLAVIGGDGIGPEVTAEALKVLDAVLPGVDKTEYDLGARRYHATGELLPDSVIDELRAHDAILLGAIGDPSVPSGVLERGLLLRLRFELDHHINLRPGRLYPGVSSPLAGNPDIDFVVVREGTEGPYTGTGGAIRVGTPNEVATEVSQNTAFGVRRVVVDAFERARRRRKHLTLVHKTNVLTFAGKLWSRIVAEVGRDYPDVEVAYQHIDAATIFMVTDPGRFDVIVTDNLFGDIITDLSAAVCGGIGLAASGNIDGTRTNPSMFEPVHGSAPDIAGQGVADPTAAIMSVALLLAHLGEDAAATRVDRAVERYLATRGNERPATTEVGERIAAAL</sequence>
<comment type="function">
    <text evidence="1">Catalyzes the oxidation of 3-carboxy-2-hydroxy-4-methylpentanoate (3-isopropylmalate) to 3-carboxy-4-methyl-2-oxopentanoate. The product decarboxylates to 4-methyl-2 oxopentanoate.</text>
</comment>
<comment type="catalytic activity">
    <reaction evidence="1">
        <text>(2R,3S)-3-isopropylmalate + NAD(+) = 4-methyl-2-oxopentanoate + CO2 + NADH</text>
        <dbReference type="Rhea" id="RHEA:32271"/>
        <dbReference type="ChEBI" id="CHEBI:16526"/>
        <dbReference type="ChEBI" id="CHEBI:17865"/>
        <dbReference type="ChEBI" id="CHEBI:35121"/>
        <dbReference type="ChEBI" id="CHEBI:57540"/>
        <dbReference type="ChEBI" id="CHEBI:57945"/>
        <dbReference type="EC" id="1.1.1.85"/>
    </reaction>
</comment>
<comment type="cofactor">
    <cofactor evidence="1">
        <name>Mg(2+)</name>
        <dbReference type="ChEBI" id="CHEBI:18420"/>
    </cofactor>
    <cofactor evidence="1">
        <name>Mn(2+)</name>
        <dbReference type="ChEBI" id="CHEBI:29035"/>
    </cofactor>
    <text evidence="1">Binds 1 Mg(2+) or Mn(2+) ion per subunit.</text>
</comment>
<comment type="pathway">
    <text evidence="1">Amino-acid biosynthesis; L-leucine biosynthesis; L-leucine from 3-methyl-2-oxobutanoate: step 3/4.</text>
</comment>
<comment type="subunit">
    <text evidence="1">Homodimer.</text>
</comment>
<comment type="subcellular location">
    <subcellularLocation>
        <location evidence="1">Cytoplasm</location>
    </subcellularLocation>
</comment>
<comment type="similarity">
    <text evidence="1">Belongs to the isocitrate and isopropylmalate dehydrogenases family. LeuB type 2 subfamily.</text>
</comment>
<feature type="chain" id="PRO_1000063871" description="3-isopropylmalate dehydrogenase">
    <location>
        <begin position="1"/>
        <end position="336"/>
    </location>
</feature>
<feature type="binding site" evidence="1">
    <location>
        <position position="87"/>
    </location>
    <ligand>
        <name>substrate</name>
    </ligand>
</feature>
<feature type="binding site" evidence="1">
    <location>
        <position position="97"/>
    </location>
    <ligand>
        <name>substrate</name>
    </ligand>
</feature>
<feature type="binding site" evidence="1">
    <location>
        <position position="121"/>
    </location>
    <ligand>
        <name>substrate</name>
    </ligand>
</feature>
<feature type="binding site" evidence="1">
    <location>
        <position position="211"/>
    </location>
    <ligand>
        <name>Mg(2+)</name>
        <dbReference type="ChEBI" id="CHEBI:18420"/>
    </ligand>
</feature>
<feature type="binding site" evidence="1">
    <location>
        <position position="211"/>
    </location>
    <ligand>
        <name>substrate</name>
    </ligand>
</feature>
<feature type="binding site" evidence="1">
    <location>
        <position position="235"/>
    </location>
    <ligand>
        <name>Mg(2+)</name>
        <dbReference type="ChEBI" id="CHEBI:18420"/>
    </ligand>
</feature>
<feature type="binding site" evidence="1">
    <location>
        <position position="239"/>
    </location>
    <ligand>
        <name>Mg(2+)</name>
        <dbReference type="ChEBI" id="CHEBI:18420"/>
    </ligand>
</feature>
<feature type="binding site" evidence="1">
    <location>
        <begin position="271"/>
        <end position="283"/>
    </location>
    <ligand>
        <name>NAD(+)</name>
        <dbReference type="ChEBI" id="CHEBI:57540"/>
    </ligand>
</feature>
<feature type="site" description="Important for catalysis" evidence="1">
    <location>
        <position position="128"/>
    </location>
</feature>
<feature type="site" description="Important for catalysis" evidence="1">
    <location>
        <position position="178"/>
    </location>
</feature>
<keyword id="KW-0028">Amino-acid biosynthesis</keyword>
<keyword id="KW-0100">Branched-chain amino acid biosynthesis</keyword>
<keyword id="KW-0963">Cytoplasm</keyword>
<keyword id="KW-0432">Leucine biosynthesis</keyword>
<keyword id="KW-0460">Magnesium</keyword>
<keyword id="KW-0464">Manganese</keyword>
<keyword id="KW-0479">Metal-binding</keyword>
<keyword id="KW-0520">NAD</keyword>
<keyword id="KW-0560">Oxidoreductase</keyword>
<dbReference type="EC" id="1.1.1.85" evidence="1"/>
<dbReference type="EMBL" id="CP000479">
    <property type="protein sequence ID" value="ABK65738.1"/>
    <property type="molecule type" value="Genomic_DNA"/>
</dbReference>
<dbReference type="RefSeq" id="WP_009978239.1">
    <property type="nucleotide sequence ID" value="NC_008595.1"/>
</dbReference>
<dbReference type="SMR" id="A0QJC2"/>
<dbReference type="KEGG" id="mav:MAV_3845"/>
<dbReference type="HOGENOM" id="CLU_031953_0_1_11"/>
<dbReference type="UniPathway" id="UPA00048">
    <property type="reaction ID" value="UER00072"/>
</dbReference>
<dbReference type="Proteomes" id="UP000001574">
    <property type="component" value="Chromosome"/>
</dbReference>
<dbReference type="GO" id="GO:0005737">
    <property type="term" value="C:cytoplasm"/>
    <property type="evidence" value="ECO:0007669"/>
    <property type="project" value="UniProtKB-SubCell"/>
</dbReference>
<dbReference type="GO" id="GO:0003862">
    <property type="term" value="F:3-isopropylmalate dehydrogenase activity"/>
    <property type="evidence" value="ECO:0007669"/>
    <property type="project" value="UniProtKB-UniRule"/>
</dbReference>
<dbReference type="GO" id="GO:0000287">
    <property type="term" value="F:magnesium ion binding"/>
    <property type="evidence" value="ECO:0007669"/>
    <property type="project" value="InterPro"/>
</dbReference>
<dbReference type="GO" id="GO:0051287">
    <property type="term" value="F:NAD binding"/>
    <property type="evidence" value="ECO:0007669"/>
    <property type="project" value="InterPro"/>
</dbReference>
<dbReference type="GO" id="GO:0009098">
    <property type="term" value="P:L-leucine biosynthetic process"/>
    <property type="evidence" value="ECO:0007669"/>
    <property type="project" value="UniProtKB-UniRule"/>
</dbReference>
<dbReference type="Gene3D" id="3.40.718.10">
    <property type="entry name" value="Isopropylmalate Dehydrogenase"/>
    <property type="match status" value="1"/>
</dbReference>
<dbReference type="HAMAP" id="MF_01035">
    <property type="entry name" value="LeuB_type2"/>
    <property type="match status" value="1"/>
</dbReference>
<dbReference type="InterPro" id="IPR050501">
    <property type="entry name" value="ICDH/IPMDH"/>
</dbReference>
<dbReference type="InterPro" id="IPR019818">
    <property type="entry name" value="IsoCit/isopropylmalate_DH_CS"/>
</dbReference>
<dbReference type="InterPro" id="IPR024084">
    <property type="entry name" value="IsoPropMal-DH-like_dom"/>
</dbReference>
<dbReference type="InterPro" id="IPR023698">
    <property type="entry name" value="LeuB_actb"/>
</dbReference>
<dbReference type="NCBIfam" id="NF002898">
    <property type="entry name" value="PRK03437.1"/>
    <property type="match status" value="1"/>
</dbReference>
<dbReference type="PANTHER" id="PTHR43275">
    <property type="entry name" value="D-MALATE DEHYDROGENASE [DECARBOXYLATING]"/>
    <property type="match status" value="1"/>
</dbReference>
<dbReference type="PANTHER" id="PTHR43275:SF1">
    <property type="entry name" value="D-MALATE DEHYDROGENASE [DECARBOXYLATING]"/>
    <property type="match status" value="1"/>
</dbReference>
<dbReference type="Pfam" id="PF00180">
    <property type="entry name" value="Iso_dh"/>
    <property type="match status" value="1"/>
</dbReference>
<dbReference type="SMART" id="SM01329">
    <property type="entry name" value="Iso_dh"/>
    <property type="match status" value="1"/>
</dbReference>
<dbReference type="SUPFAM" id="SSF53659">
    <property type="entry name" value="Isocitrate/Isopropylmalate dehydrogenase-like"/>
    <property type="match status" value="1"/>
</dbReference>
<dbReference type="PROSITE" id="PS00470">
    <property type="entry name" value="IDH_IMDH"/>
    <property type="match status" value="1"/>
</dbReference>
<proteinExistence type="inferred from homology"/>